<proteinExistence type="evidence at transcript level"/>
<comment type="function">
    <text>Gliadin is the major seed storage protein in wheat.</text>
</comment>
<comment type="PTM">
    <text evidence="1">Substrate of transglutaminase.</text>
</comment>
<comment type="allergen">
    <text evidence="1">Causes an allergic reaction in human. Is the cause of the celiac disease, also known as celiac sprue or gluten-sensitive enteropathy (By similarity).</text>
</comment>
<comment type="miscellaneous">
    <text>The alpha/beta-gliadins can be divided into 5 homology classes. Sequence divergence between the classes is due to single base substitutions and to duplications or deletions within or near direct repeats. There are more than a 100 copies of the gene for alpha/beta-gliadin per haploid genome.</text>
</comment>
<comment type="similarity">
    <text evidence="3">Belongs to the gliadin/glutenin family.</text>
</comment>
<keyword id="KW-0020">Allergen</keyword>
<keyword id="KW-1185">Reference proteome</keyword>
<keyword id="KW-0677">Repeat</keyword>
<keyword id="KW-0708">Seed storage protein</keyword>
<keyword id="KW-0732">Signal</keyword>
<keyword id="KW-0758">Storage protein</keyword>
<sequence>MKTFLILALLAIVATTATTAVRVPVPQLQPQNPSQQQPQEQVPLVQQQQFLGQQQPFPPQQPYPQPQPFPSQQPYLQLQPFLQPQLPYSQPQPFRPQQPYPQPQPQYSQPQQPISQQQQQQQQQQQQQQQQQQQIIQQILQQQLIPCMDVVLQQHNIVHGKSQVLQQSTYQLLQELCCQHLWQIPEQSQCQAIHNVVHAIILHQQQKQQQQPSSQVSFQQPLQQYPLGQGSFRPSQQNPQAQGSVQPQQLPQFEEIRNLARK</sequence>
<dbReference type="EMBL" id="M11074">
    <property type="protein sequence ID" value="AAA34281.1"/>
    <property type="molecule type" value="mRNA"/>
</dbReference>
<dbReference type="PIR" id="B22364">
    <property type="entry name" value="B22364"/>
</dbReference>
<dbReference type="SMR" id="P04721"/>
<dbReference type="STRING" id="4565.P04721"/>
<dbReference type="Proteomes" id="UP000019116">
    <property type="component" value="Unplaced"/>
</dbReference>
<dbReference type="ExpressionAtlas" id="P04721">
    <property type="expression patterns" value="baseline"/>
</dbReference>
<dbReference type="GO" id="GO:0045735">
    <property type="term" value="F:nutrient reservoir activity"/>
    <property type="evidence" value="ECO:0007669"/>
    <property type="project" value="UniProtKB-KW"/>
</dbReference>
<dbReference type="Gene3D" id="1.10.110.10">
    <property type="entry name" value="Plant lipid-transfer and hydrophobic proteins"/>
    <property type="match status" value="1"/>
</dbReference>
<dbReference type="InterPro" id="IPR036312">
    <property type="entry name" value="Bifun_inhib/LTP/seed_sf"/>
</dbReference>
<dbReference type="InterPro" id="IPR016140">
    <property type="entry name" value="Bifunc_inhib/LTP/seed_store"/>
</dbReference>
<dbReference type="InterPro" id="IPR001954">
    <property type="entry name" value="Glia_glutenin"/>
</dbReference>
<dbReference type="PANTHER" id="PTHR33454:SF7">
    <property type="entry name" value="ALPHA_BETA-GLIADIN MM1"/>
    <property type="match status" value="1"/>
</dbReference>
<dbReference type="PANTHER" id="PTHR33454">
    <property type="entry name" value="PROLAMIN PPROL 14P"/>
    <property type="match status" value="1"/>
</dbReference>
<dbReference type="Pfam" id="PF13016">
    <property type="entry name" value="Gliadin"/>
    <property type="match status" value="1"/>
</dbReference>
<dbReference type="PRINTS" id="PR00208">
    <property type="entry name" value="GLIADGLUTEN"/>
</dbReference>
<dbReference type="PRINTS" id="PR00209">
    <property type="entry name" value="GLIADIN"/>
</dbReference>
<dbReference type="SUPFAM" id="SSF47699">
    <property type="entry name" value="Bifunctional inhibitor/lipid-transfer protein/seed storage 2S albumin"/>
    <property type="match status" value="1"/>
</dbReference>
<protein>
    <recommendedName>
        <fullName>Alpha/beta-gliadin A-I</fullName>
    </recommendedName>
    <alternativeName>
        <fullName>Prolamin</fullName>
    </alternativeName>
</protein>
<evidence type="ECO:0000250" key="1"/>
<evidence type="ECO:0000256" key="2">
    <source>
        <dbReference type="SAM" id="MobiDB-lite"/>
    </source>
</evidence>
<evidence type="ECO:0000305" key="3"/>
<name>GDA1_WHEAT</name>
<organism>
    <name type="scientific">Triticum aestivum</name>
    <name type="common">Wheat</name>
    <dbReference type="NCBI Taxonomy" id="4565"/>
    <lineage>
        <taxon>Eukaryota</taxon>
        <taxon>Viridiplantae</taxon>
        <taxon>Streptophyta</taxon>
        <taxon>Embryophyta</taxon>
        <taxon>Tracheophyta</taxon>
        <taxon>Spermatophyta</taxon>
        <taxon>Magnoliopsida</taxon>
        <taxon>Liliopsida</taxon>
        <taxon>Poales</taxon>
        <taxon>Poaceae</taxon>
        <taxon>BOP clade</taxon>
        <taxon>Pooideae</taxon>
        <taxon>Triticodae</taxon>
        <taxon>Triticeae</taxon>
        <taxon>Triticinae</taxon>
        <taxon>Triticum</taxon>
    </lineage>
</organism>
<accession>P04721</accession>
<feature type="signal peptide">
    <location>
        <begin position="1"/>
        <end position="20"/>
    </location>
</feature>
<feature type="chain" id="PRO_0000032268" description="Alpha/beta-gliadin A-I">
    <location>
        <begin position="21"/>
        <end position="262"/>
    </location>
</feature>
<feature type="region of interest" description="Disordered" evidence="2">
    <location>
        <begin position="51"/>
        <end position="73"/>
    </location>
</feature>
<feature type="region of interest" description="Disordered" evidence="2">
    <location>
        <begin position="87"/>
        <end position="120"/>
    </location>
</feature>
<feature type="region of interest" description="Disordered" evidence="2">
    <location>
        <begin position="225"/>
        <end position="251"/>
    </location>
</feature>
<feature type="compositionally biased region" description="Pro residues" evidence="2">
    <location>
        <begin position="56"/>
        <end position="71"/>
    </location>
</feature>
<feature type="compositionally biased region" description="Pro residues" evidence="2">
    <location>
        <begin position="93"/>
        <end position="104"/>
    </location>
</feature>
<feature type="compositionally biased region" description="Low complexity" evidence="2">
    <location>
        <begin position="105"/>
        <end position="120"/>
    </location>
</feature>
<feature type="compositionally biased region" description="Polar residues" evidence="2">
    <location>
        <begin position="232"/>
        <end position="251"/>
    </location>
</feature>
<reference key="1">
    <citation type="journal article" date="1985" name="J. Biol. Chem.">
        <title>Evolution and heterogeneity of the alpha-/beta-type and gamma-type gliadin DNA sequences.</title>
        <authorList>
            <person name="Okita T.W."/>
            <person name="Cheesbrough V."/>
            <person name="Reeves C.D."/>
        </authorList>
    </citation>
    <scope>NUCLEOTIDE SEQUENCE [MRNA]</scope>
</reference>